<protein>
    <recommendedName>
        <fullName>Monocarboxylate transporter 10</fullName>
        <shortName>MCT 10</shortName>
    </recommendedName>
    <alternativeName>
        <fullName>Aromatic amino acid transporter 1</fullName>
    </alternativeName>
    <alternativeName>
        <fullName>Solute carrier family 16 member 10</fullName>
    </alternativeName>
    <alternativeName>
        <fullName>T-type amino acid transporter 1</fullName>
    </alternativeName>
</protein>
<sequence>MVPSQEEPAAAERETNEAQPPGPAPSDDAPLPVPGPSDVSDGSVEKVEVELTRSTGNQEPPEPPEGGWGWLVMLAAMWCNGSVFGIQNAYGVLFVSMLETFGAKDDDNMAFKAAWVGSLSMGMIFFCCPIVSVFTDMFGCRRTAVLGAAVGFVGLMSSSFVSSIEPLYFTYGVVFACGCSFAYQPSLVILGHYFKKRLGLVNGIVTAGSSVFTILLPLLLGNLTSTVGLCYTLRILCIFMFVLFLAGFTYRPLVPSSKEKESEDSRSSFFSRRKLSPPKKIFNFALFKETAYAVWAAGIPLALFGYFVPYVHLMNHVKERFKDVNNKEVLFMCIGVTSGVGRLLFGRIADYLPGVKKVYLQVLSFFFIGLTSMMIPLCSVFGALIALCLIMGLFDGCFISIMAPIAFELVGPQDASQAIGFLLGFMSIPMTVGPPVAGLLHDKLGSYDLAFYLAGIPPFIGGAVLCLIPWIHSKKQREISKNTGGEKMEKMLANQSSLLSSSSGIFKKESDSII</sequence>
<dbReference type="EMBL" id="AB047324">
    <property type="protein sequence ID" value="BAB55595.1"/>
    <property type="molecule type" value="mRNA"/>
</dbReference>
<dbReference type="EMBL" id="AABR07045360">
    <property type="status" value="NOT_ANNOTATED_CDS"/>
    <property type="molecule type" value="Genomic_DNA"/>
</dbReference>
<dbReference type="EMBL" id="AABR07045361">
    <property type="status" value="NOT_ANNOTATED_CDS"/>
    <property type="molecule type" value="Genomic_DNA"/>
</dbReference>
<dbReference type="EMBL" id="AABR07045362">
    <property type="status" value="NOT_ANNOTATED_CDS"/>
    <property type="molecule type" value="Genomic_DNA"/>
</dbReference>
<dbReference type="EMBL" id="AABR07045363">
    <property type="status" value="NOT_ANNOTATED_CDS"/>
    <property type="molecule type" value="Genomic_DNA"/>
</dbReference>
<dbReference type="EMBL" id="AABR07045364">
    <property type="status" value="NOT_ANNOTATED_CDS"/>
    <property type="molecule type" value="Genomic_DNA"/>
</dbReference>
<dbReference type="EMBL" id="AABR07045365">
    <property type="status" value="NOT_ANNOTATED_CDS"/>
    <property type="molecule type" value="Genomic_DNA"/>
</dbReference>
<dbReference type="EMBL" id="AABR07045366">
    <property type="status" value="NOT_ANNOTATED_CDS"/>
    <property type="molecule type" value="Genomic_DNA"/>
</dbReference>
<dbReference type="EMBL" id="AABR07045367">
    <property type="status" value="NOT_ANNOTATED_CDS"/>
    <property type="molecule type" value="Genomic_DNA"/>
</dbReference>
<dbReference type="EMBL" id="AABR07045368">
    <property type="status" value="NOT_ANNOTATED_CDS"/>
    <property type="molecule type" value="Genomic_DNA"/>
</dbReference>
<dbReference type="EMBL" id="AABR07045369">
    <property type="status" value="NOT_ANNOTATED_CDS"/>
    <property type="molecule type" value="Genomic_DNA"/>
</dbReference>
<dbReference type="EMBL" id="CH474051">
    <property type="protein sequence ID" value="EDL87836.1"/>
    <property type="molecule type" value="Genomic_DNA"/>
</dbReference>
<dbReference type="RefSeq" id="NP_620186.1">
    <property type="nucleotide sequence ID" value="NM_138831.1"/>
</dbReference>
<dbReference type="RefSeq" id="XP_008771196.1">
    <property type="nucleotide sequence ID" value="XM_008772974.2"/>
</dbReference>
<dbReference type="SMR" id="Q91Y77"/>
<dbReference type="FunCoup" id="Q91Y77">
    <property type="interactions" value="521"/>
</dbReference>
<dbReference type="STRING" id="10116.ENSRNOP00000000718"/>
<dbReference type="BindingDB" id="Q91Y77"/>
<dbReference type="ChEMBL" id="CHEMBL2073717"/>
<dbReference type="TCDB" id="2.A.1.13.2">
    <property type="family name" value="the major facilitator superfamily (mfs)"/>
</dbReference>
<dbReference type="iPTMnet" id="Q91Y77"/>
<dbReference type="PhosphoSitePlus" id="Q91Y77"/>
<dbReference type="jPOST" id="Q91Y77"/>
<dbReference type="PaxDb" id="10116-ENSRNOP00000000718"/>
<dbReference type="Ensembl" id="ENSRNOT00000000718.6">
    <property type="protein sequence ID" value="ENSRNOP00000000718.4"/>
    <property type="gene ID" value="ENSRNOG00000000588.6"/>
</dbReference>
<dbReference type="GeneID" id="170566"/>
<dbReference type="KEGG" id="rno:170566"/>
<dbReference type="UCSC" id="RGD:69197">
    <property type="organism name" value="rat"/>
</dbReference>
<dbReference type="AGR" id="RGD:69197"/>
<dbReference type="CTD" id="117247"/>
<dbReference type="RGD" id="69197">
    <property type="gene designation" value="Slc16a10"/>
</dbReference>
<dbReference type="eggNOG" id="KOG2504">
    <property type="taxonomic scope" value="Eukaryota"/>
</dbReference>
<dbReference type="GeneTree" id="ENSGT00940000157966"/>
<dbReference type="HOGENOM" id="CLU_001265_59_1_1"/>
<dbReference type="InParanoid" id="Q91Y77"/>
<dbReference type="OMA" id="LSYRIWA"/>
<dbReference type="OrthoDB" id="6499973at2759"/>
<dbReference type="PhylomeDB" id="Q91Y77"/>
<dbReference type="TreeFam" id="TF313792"/>
<dbReference type="Reactome" id="R-RNO-352230">
    <property type="pathway name" value="Amino acid transport across the plasma membrane"/>
</dbReference>
<dbReference type="PRO" id="PR:Q91Y77"/>
<dbReference type="Proteomes" id="UP000002494">
    <property type="component" value="Chromosome 20"/>
</dbReference>
<dbReference type="Proteomes" id="UP000234681">
    <property type="component" value="Chromosome 20"/>
</dbReference>
<dbReference type="Bgee" id="ENSRNOG00000000588">
    <property type="expression patterns" value="Expressed in jejunum and 17 other cell types or tissues"/>
</dbReference>
<dbReference type="GO" id="GO:0016323">
    <property type="term" value="C:basolateral plasma membrane"/>
    <property type="evidence" value="ECO:0000314"/>
    <property type="project" value="UniProtKB"/>
</dbReference>
<dbReference type="GO" id="GO:0030054">
    <property type="term" value="C:cell junction"/>
    <property type="evidence" value="ECO:0007669"/>
    <property type="project" value="Ensembl"/>
</dbReference>
<dbReference type="GO" id="GO:0043231">
    <property type="term" value="C:intracellular membrane-bounded organelle"/>
    <property type="evidence" value="ECO:0007669"/>
    <property type="project" value="Ensembl"/>
</dbReference>
<dbReference type="GO" id="GO:0005886">
    <property type="term" value="C:plasma membrane"/>
    <property type="evidence" value="ECO:0000266"/>
    <property type="project" value="RGD"/>
</dbReference>
<dbReference type="GO" id="GO:0015173">
    <property type="term" value="F:aromatic amino acid transmembrane transporter activity"/>
    <property type="evidence" value="ECO:0000314"/>
    <property type="project" value="UniProtKB"/>
</dbReference>
<dbReference type="GO" id="GO:0015192">
    <property type="term" value="F:L-phenylalanine transmembrane transporter activity"/>
    <property type="evidence" value="ECO:0000314"/>
    <property type="project" value="UniProtKB"/>
</dbReference>
<dbReference type="GO" id="GO:0015196">
    <property type="term" value="F:L-tryptophan transmembrane transporter activity"/>
    <property type="evidence" value="ECO:0000314"/>
    <property type="project" value="UniProtKB"/>
</dbReference>
<dbReference type="GO" id="GO:0005302">
    <property type="term" value="F:L-tyrosine transmembrane transporter activity"/>
    <property type="evidence" value="ECO:0000314"/>
    <property type="project" value="UniProtKB"/>
</dbReference>
<dbReference type="GO" id="GO:0015349">
    <property type="term" value="F:thyroid hormone transmembrane transporter activity"/>
    <property type="evidence" value="ECO:0000250"/>
    <property type="project" value="UniProtKB"/>
</dbReference>
<dbReference type="GO" id="GO:0022857">
    <property type="term" value="F:transmembrane transporter activity"/>
    <property type="evidence" value="ECO:0000318"/>
    <property type="project" value="GO_Central"/>
</dbReference>
<dbReference type="GO" id="GO:0015801">
    <property type="term" value="P:aromatic amino acid transport"/>
    <property type="evidence" value="ECO:0000314"/>
    <property type="project" value="UniProtKB"/>
</dbReference>
<dbReference type="GO" id="GO:0006590">
    <property type="term" value="P:thyroid hormone generation"/>
    <property type="evidence" value="ECO:0000266"/>
    <property type="project" value="RGD"/>
</dbReference>
<dbReference type="GO" id="GO:0070327">
    <property type="term" value="P:thyroid hormone transport"/>
    <property type="evidence" value="ECO:0000250"/>
    <property type="project" value="UniProtKB"/>
</dbReference>
<dbReference type="GO" id="GO:0070460">
    <property type="term" value="P:thyroid-stimulating hormone secretion"/>
    <property type="evidence" value="ECO:0000266"/>
    <property type="project" value="RGD"/>
</dbReference>
<dbReference type="FunFam" id="1.20.1250.20:FF:001016">
    <property type="entry name" value="Solute carrier family 16 member 2"/>
    <property type="match status" value="1"/>
</dbReference>
<dbReference type="Gene3D" id="1.20.1250.20">
    <property type="entry name" value="MFS general substrate transporter like domains"/>
    <property type="match status" value="2"/>
</dbReference>
<dbReference type="InterPro" id="IPR011701">
    <property type="entry name" value="MFS"/>
</dbReference>
<dbReference type="InterPro" id="IPR020846">
    <property type="entry name" value="MFS_dom"/>
</dbReference>
<dbReference type="InterPro" id="IPR036259">
    <property type="entry name" value="MFS_trans_sf"/>
</dbReference>
<dbReference type="InterPro" id="IPR050327">
    <property type="entry name" value="Proton-linked_MCT"/>
</dbReference>
<dbReference type="PANTHER" id="PTHR11360">
    <property type="entry name" value="MONOCARBOXYLATE TRANSPORTER"/>
    <property type="match status" value="1"/>
</dbReference>
<dbReference type="PANTHER" id="PTHR11360:SF119">
    <property type="entry name" value="MONOCARBOXYLATE TRANSPORTER 10"/>
    <property type="match status" value="1"/>
</dbReference>
<dbReference type="Pfam" id="PF07690">
    <property type="entry name" value="MFS_1"/>
    <property type="match status" value="1"/>
</dbReference>
<dbReference type="SUPFAM" id="SSF103473">
    <property type="entry name" value="MFS general substrate transporter"/>
    <property type="match status" value="1"/>
</dbReference>
<dbReference type="PROSITE" id="PS50850">
    <property type="entry name" value="MFS"/>
    <property type="match status" value="1"/>
</dbReference>
<organism>
    <name type="scientific">Rattus norvegicus</name>
    <name type="common">Rat</name>
    <dbReference type="NCBI Taxonomy" id="10116"/>
    <lineage>
        <taxon>Eukaryota</taxon>
        <taxon>Metazoa</taxon>
        <taxon>Chordata</taxon>
        <taxon>Craniata</taxon>
        <taxon>Vertebrata</taxon>
        <taxon>Euteleostomi</taxon>
        <taxon>Mammalia</taxon>
        <taxon>Eutheria</taxon>
        <taxon>Euarchontoglires</taxon>
        <taxon>Glires</taxon>
        <taxon>Rodentia</taxon>
        <taxon>Myomorpha</taxon>
        <taxon>Muroidea</taxon>
        <taxon>Muridae</taxon>
        <taxon>Murinae</taxon>
        <taxon>Rattus</taxon>
    </lineage>
</organism>
<evidence type="ECO:0000250" key="1"/>
<evidence type="ECO:0000250" key="2">
    <source>
        <dbReference type="UniProtKB" id="Q3U9N9"/>
    </source>
</evidence>
<evidence type="ECO:0000250" key="3">
    <source>
        <dbReference type="UniProtKB" id="Q8TF71"/>
    </source>
</evidence>
<evidence type="ECO:0000255" key="4"/>
<evidence type="ECO:0000256" key="5">
    <source>
        <dbReference type="SAM" id="MobiDB-lite"/>
    </source>
</evidence>
<evidence type="ECO:0000269" key="6">
    <source>
    </source>
</evidence>
<evidence type="ECO:0000305" key="7"/>
<evidence type="ECO:0000305" key="8">
    <source>
    </source>
</evidence>
<evidence type="ECO:0007744" key="9">
    <source>
    </source>
</evidence>
<feature type="chain" id="PRO_0000314255" description="Monocarboxylate transporter 10">
    <location>
        <begin position="1"/>
        <end position="514"/>
    </location>
</feature>
<feature type="topological domain" description="Cytoplasmic" evidence="7">
    <location>
        <begin position="1"/>
        <end position="65"/>
    </location>
</feature>
<feature type="transmembrane region" description="Helical; Name=1" evidence="4">
    <location>
        <begin position="66"/>
        <end position="86"/>
    </location>
</feature>
<feature type="topological domain" description="Extracellular" evidence="7">
    <location>
        <begin position="87"/>
        <end position="113"/>
    </location>
</feature>
<feature type="transmembrane region" description="Helical; Name=2" evidence="4">
    <location>
        <begin position="114"/>
        <end position="134"/>
    </location>
</feature>
<feature type="topological domain" description="Cytoplasmic" evidence="7">
    <location>
        <begin position="135"/>
        <end position="143"/>
    </location>
</feature>
<feature type="transmembrane region" description="Helical; Name=3" evidence="4">
    <location>
        <begin position="144"/>
        <end position="164"/>
    </location>
</feature>
<feature type="topological domain" description="Extracellular" evidence="7">
    <location>
        <begin position="165"/>
        <end position="170"/>
    </location>
</feature>
<feature type="transmembrane region" description="Helical; Name=4" evidence="4">
    <location>
        <begin position="171"/>
        <end position="191"/>
    </location>
</feature>
<feature type="topological domain" description="Cytoplasmic" evidence="7">
    <location>
        <begin position="192"/>
        <end position="199"/>
    </location>
</feature>
<feature type="transmembrane region" description="Helical; Name=5" evidence="4">
    <location>
        <begin position="200"/>
        <end position="220"/>
    </location>
</feature>
<feature type="topological domain" description="Extracellular" evidence="7">
    <location>
        <begin position="221"/>
        <end position="227"/>
    </location>
</feature>
<feature type="transmembrane region" description="Helical; Name=6" evidence="4">
    <location>
        <begin position="228"/>
        <end position="248"/>
    </location>
</feature>
<feature type="topological domain" description="Cytoplasmic" evidence="7">
    <location>
        <begin position="249"/>
        <end position="290"/>
    </location>
</feature>
<feature type="transmembrane region" description="Helical; Name=7" evidence="4">
    <location>
        <begin position="291"/>
        <end position="311"/>
    </location>
</feature>
<feature type="topological domain" description="Extracellular" evidence="7">
    <location>
        <begin position="312"/>
        <end position="328"/>
    </location>
</feature>
<feature type="transmembrane region" description="Helical; Name=8" evidence="4">
    <location>
        <begin position="329"/>
        <end position="349"/>
    </location>
</feature>
<feature type="topological domain" description="Cytoplasmic" evidence="7">
    <location>
        <position position="350"/>
    </location>
</feature>
<feature type="transmembrane region" description="Helical; Name=9" evidence="4">
    <location>
        <begin position="351"/>
        <end position="371"/>
    </location>
</feature>
<feature type="topological domain" description="Extracellular" evidence="7">
    <location>
        <begin position="372"/>
        <end position="395"/>
    </location>
</feature>
<feature type="transmembrane region" description="Helical; Name=10" evidence="4">
    <location>
        <begin position="396"/>
        <end position="416"/>
    </location>
</feature>
<feature type="topological domain" description="Cytoplasmic" evidence="7">
    <location>
        <begin position="417"/>
        <end position="418"/>
    </location>
</feature>
<feature type="transmembrane region" description="Helical; Name=11" evidence="4">
    <location>
        <begin position="419"/>
        <end position="439"/>
    </location>
</feature>
<feature type="topological domain" description="Extracellular" evidence="7">
    <location>
        <begin position="440"/>
        <end position="450"/>
    </location>
</feature>
<feature type="transmembrane region" description="Helical; Name=12" evidence="4">
    <location>
        <begin position="451"/>
        <end position="471"/>
    </location>
</feature>
<feature type="topological domain" description="Cytoplasmic" evidence="7">
    <location>
        <begin position="472"/>
        <end position="514"/>
    </location>
</feature>
<feature type="region of interest" description="Disordered" evidence="5">
    <location>
        <begin position="1"/>
        <end position="64"/>
    </location>
</feature>
<feature type="modified residue" description="Phosphoserine" evidence="9">
    <location>
        <position position="262"/>
    </location>
</feature>
<feature type="modified residue" description="Phosphoserine" evidence="9">
    <location>
        <position position="497"/>
    </location>
</feature>
<feature type="modified residue" description="Phosphoserine" evidence="3">
    <location>
        <position position="500"/>
    </location>
</feature>
<feature type="modified residue" description="Phosphoserine" evidence="2">
    <location>
        <position position="502"/>
    </location>
</feature>
<feature type="modified residue" description="Phosphoserine" evidence="9">
    <location>
        <position position="503"/>
    </location>
</feature>
<feature type="sequence conflict" description="In Ref. 1; BAB55595." ref="1">
    <original>Q</original>
    <variation>L</variation>
    <location>
        <position position="5"/>
    </location>
</feature>
<name>MOT10_RAT</name>
<keyword id="KW-1003">Cell membrane</keyword>
<keyword id="KW-0472">Membrane</keyword>
<keyword id="KW-0597">Phosphoprotein</keyword>
<keyword id="KW-1185">Reference proteome</keyword>
<keyword id="KW-0812">Transmembrane</keyword>
<keyword id="KW-1133">Transmembrane helix</keyword>
<keyword id="KW-0813">Transport</keyword>
<comment type="function">
    <text evidence="2 3 6">Sodium- and proton-independent thyroid hormones and aromatic acids transporter. Mediates both uptake and efflux of 3,5,3'-triiodothyronine (T3) and 3,5,3',5'-tetraiodothyronine (T4) with high affinity, suggesting a role in the homeostasis of thyroid hormone levels (By similarity). Responsible for low affinity bidirectional transport of the aromatic amino acids, such as phenylalanine, tyrosine, tryptophan and L-3,4-dihydroxyphenylalanine (L-dopa) (PubMed:11278508). Plays an important role in homeostasis of aromatic amino acids (By similarity).</text>
</comment>
<comment type="catalytic activity">
    <reaction evidence="6">
        <text>L-tryptophan(in) = L-tryptophan(out)</text>
        <dbReference type="Rhea" id="RHEA:70947"/>
        <dbReference type="ChEBI" id="CHEBI:57912"/>
    </reaction>
    <physiologicalReaction direction="left-to-right" evidence="2">
        <dbReference type="Rhea" id="RHEA:70948"/>
    </physiologicalReaction>
    <physiologicalReaction direction="right-to-left" evidence="8">
        <dbReference type="Rhea" id="RHEA:70949"/>
    </physiologicalReaction>
</comment>
<comment type="catalytic activity">
    <reaction evidence="6">
        <text>L-tyrosine(in) = L-tyrosine(out)</text>
        <dbReference type="Rhea" id="RHEA:68572"/>
        <dbReference type="ChEBI" id="CHEBI:58315"/>
    </reaction>
    <physiologicalReaction direction="left-to-right" evidence="2">
        <dbReference type="Rhea" id="RHEA:68573"/>
    </physiologicalReaction>
    <physiologicalReaction direction="right-to-left" evidence="8">
        <dbReference type="Rhea" id="RHEA:68574"/>
    </physiologicalReaction>
</comment>
<comment type="catalytic activity">
    <reaction evidence="6">
        <text>L-phenylalanine(in) = L-phenylalanine(out)</text>
        <dbReference type="Rhea" id="RHEA:27950"/>
        <dbReference type="ChEBI" id="CHEBI:58095"/>
    </reaction>
    <physiologicalReaction direction="left-to-right" evidence="2">
        <dbReference type="Rhea" id="RHEA:27951"/>
    </physiologicalReaction>
    <physiologicalReaction direction="right-to-left" evidence="8">
        <dbReference type="Rhea" id="RHEA:27952"/>
    </physiologicalReaction>
</comment>
<comment type="catalytic activity">
    <reaction evidence="3">
        <text>3,3',5-triiodo-L-thyronine(out) = 3,3',5-triiodo-L-thyronine(in)</text>
        <dbReference type="Rhea" id="RHEA:71811"/>
        <dbReference type="ChEBI" id="CHEBI:533015"/>
    </reaction>
    <physiologicalReaction direction="left-to-right" evidence="3">
        <dbReference type="Rhea" id="RHEA:71812"/>
    </physiologicalReaction>
    <physiologicalReaction direction="right-to-left" evidence="3">
        <dbReference type="Rhea" id="RHEA:71813"/>
    </physiologicalReaction>
</comment>
<comment type="catalytic activity">
    <reaction evidence="3">
        <text>L-thyroxine(out) = L-thyroxine(in)</text>
        <dbReference type="Rhea" id="RHEA:71819"/>
        <dbReference type="ChEBI" id="CHEBI:58448"/>
    </reaction>
    <physiologicalReaction direction="left-to-right" evidence="3">
        <dbReference type="Rhea" id="RHEA:71820"/>
    </physiologicalReaction>
    <physiologicalReaction direction="right-to-left" evidence="3">
        <dbReference type="Rhea" id="RHEA:71821"/>
    </physiologicalReaction>
</comment>
<comment type="biophysicochemical properties">
    <kinetics>
        <KM evidence="6">3.72 mM for L-tryptophan</KM>
        <KM evidence="6">2.59 mM for L-tyrosine</KM>
        <KM evidence="6">7.02 mM for L-dopa</KM>
        <KM evidence="6">6.43 mM for L-phenylalanine</KM>
    </kinetics>
</comment>
<comment type="subcellular location">
    <subcellularLocation>
        <location evidence="3">Cell membrane</location>
        <topology evidence="4">Multi-pass membrane protein</topology>
    </subcellularLocation>
    <subcellularLocation>
        <location evidence="6">Basolateral cell membrane</location>
        <topology evidence="4">Multi-pass membrane protein</topology>
    </subcellularLocation>
    <text>In the epithelial cells is detected in the basolateral membrane but not in the apical membrane.</text>
</comment>
<comment type="tissue specificity">
    <text evidence="6">Strongly expressed in intestine, placenta and liver. In small intestine is detected in the basolateral membrane (at protein level).</text>
</comment>
<comment type="PTM">
    <text evidence="1">Not N-glycosylated.</text>
</comment>
<comment type="similarity">
    <text evidence="7">Belongs to the major facilitator superfamily. Monocarboxylate porter (TC 2.A.1.13) family.</text>
</comment>
<accession>Q91Y77</accession>
<accession>G3V621</accession>
<proteinExistence type="evidence at protein level"/>
<gene>
    <name type="primary">Slc16a10</name>
    <name type="synonym">Mct10</name>
    <name type="synonym">Tat1</name>
</gene>
<reference key="1">
    <citation type="journal article" date="2001" name="J. Biol. Chem.">
        <title>Expression cloning of a Na+-independent aromatic amino acid transporter with structural similarity to H+/monocarboxylate transporters.</title>
        <authorList>
            <person name="Kim D.K."/>
            <person name="Kanai Y."/>
            <person name="Chairoungdua A."/>
            <person name="Matsuo H."/>
            <person name="Cha S.H."/>
            <person name="Endou H."/>
        </authorList>
    </citation>
    <scope>NUCLEOTIDE SEQUENCE [MRNA]</scope>
    <scope>FUNCTION</scope>
    <scope>TRANSPORTER ACTIVITY</scope>
    <scope>SUBCELLULAR LOCATION</scope>
    <scope>TISSUE SPECIFICITY</scope>
    <scope>BIOPHYSICOCHEMICAL PROPERTIES</scope>
    <source>
        <strain>Sprague-Dawley</strain>
        <tissue>Small intestine</tissue>
    </source>
</reference>
<reference key="2">
    <citation type="journal article" date="2004" name="Nature">
        <title>Genome sequence of the Brown Norway rat yields insights into mammalian evolution.</title>
        <authorList>
            <person name="Gibbs R.A."/>
            <person name="Weinstock G.M."/>
            <person name="Metzker M.L."/>
            <person name="Muzny D.M."/>
            <person name="Sodergren E.J."/>
            <person name="Scherer S."/>
            <person name="Scott G."/>
            <person name="Steffen D."/>
            <person name="Worley K.C."/>
            <person name="Burch P.E."/>
            <person name="Okwuonu G."/>
            <person name="Hines S."/>
            <person name="Lewis L."/>
            <person name="Deramo C."/>
            <person name="Delgado O."/>
            <person name="Dugan-Rocha S."/>
            <person name="Miner G."/>
            <person name="Morgan M."/>
            <person name="Hawes A."/>
            <person name="Gill R."/>
            <person name="Holt R.A."/>
            <person name="Adams M.D."/>
            <person name="Amanatides P.G."/>
            <person name="Baden-Tillson H."/>
            <person name="Barnstead M."/>
            <person name="Chin S."/>
            <person name="Evans C.A."/>
            <person name="Ferriera S."/>
            <person name="Fosler C."/>
            <person name="Glodek A."/>
            <person name="Gu Z."/>
            <person name="Jennings D."/>
            <person name="Kraft C.L."/>
            <person name="Nguyen T."/>
            <person name="Pfannkoch C.M."/>
            <person name="Sitter C."/>
            <person name="Sutton G.G."/>
            <person name="Venter J.C."/>
            <person name="Woodage T."/>
            <person name="Smith D."/>
            <person name="Lee H.-M."/>
            <person name="Gustafson E."/>
            <person name="Cahill P."/>
            <person name="Kana A."/>
            <person name="Doucette-Stamm L."/>
            <person name="Weinstock K."/>
            <person name="Fechtel K."/>
            <person name="Weiss R.B."/>
            <person name="Dunn D.M."/>
            <person name="Green E.D."/>
            <person name="Blakesley R.W."/>
            <person name="Bouffard G.G."/>
            <person name="De Jong P.J."/>
            <person name="Osoegawa K."/>
            <person name="Zhu B."/>
            <person name="Marra M."/>
            <person name="Schein J."/>
            <person name="Bosdet I."/>
            <person name="Fjell C."/>
            <person name="Jones S."/>
            <person name="Krzywinski M."/>
            <person name="Mathewson C."/>
            <person name="Siddiqui A."/>
            <person name="Wye N."/>
            <person name="McPherson J."/>
            <person name="Zhao S."/>
            <person name="Fraser C.M."/>
            <person name="Shetty J."/>
            <person name="Shatsman S."/>
            <person name="Geer K."/>
            <person name="Chen Y."/>
            <person name="Abramzon S."/>
            <person name="Nierman W.C."/>
            <person name="Havlak P.H."/>
            <person name="Chen R."/>
            <person name="Durbin K.J."/>
            <person name="Egan A."/>
            <person name="Ren Y."/>
            <person name="Song X.-Z."/>
            <person name="Li B."/>
            <person name="Liu Y."/>
            <person name="Qin X."/>
            <person name="Cawley S."/>
            <person name="Cooney A.J."/>
            <person name="D'Souza L.M."/>
            <person name="Martin K."/>
            <person name="Wu J.Q."/>
            <person name="Gonzalez-Garay M.L."/>
            <person name="Jackson A.R."/>
            <person name="Kalafus K.J."/>
            <person name="McLeod M.P."/>
            <person name="Milosavljevic A."/>
            <person name="Virk D."/>
            <person name="Volkov A."/>
            <person name="Wheeler D.A."/>
            <person name="Zhang Z."/>
            <person name="Bailey J.A."/>
            <person name="Eichler E.E."/>
            <person name="Tuzun E."/>
            <person name="Birney E."/>
            <person name="Mongin E."/>
            <person name="Ureta-Vidal A."/>
            <person name="Woodwark C."/>
            <person name="Zdobnov E."/>
            <person name="Bork P."/>
            <person name="Suyama M."/>
            <person name="Torrents D."/>
            <person name="Alexandersson M."/>
            <person name="Trask B.J."/>
            <person name="Young J.M."/>
            <person name="Huang H."/>
            <person name="Wang H."/>
            <person name="Xing H."/>
            <person name="Daniels S."/>
            <person name="Gietzen D."/>
            <person name="Schmidt J."/>
            <person name="Stevens K."/>
            <person name="Vitt U."/>
            <person name="Wingrove J."/>
            <person name="Camara F."/>
            <person name="Mar Alba M."/>
            <person name="Abril J.F."/>
            <person name="Guigo R."/>
            <person name="Smit A."/>
            <person name="Dubchak I."/>
            <person name="Rubin E.M."/>
            <person name="Couronne O."/>
            <person name="Poliakov A."/>
            <person name="Huebner N."/>
            <person name="Ganten D."/>
            <person name="Goesele C."/>
            <person name="Hummel O."/>
            <person name="Kreitler T."/>
            <person name="Lee Y.-A."/>
            <person name="Monti J."/>
            <person name="Schulz H."/>
            <person name="Zimdahl H."/>
            <person name="Himmelbauer H."/>
            <person name="Lehrach H."/>
            <person name="Jacob H.J."/>
            <person name="Bromberg S."/>
            <person name="Gullings-Handley J."/>
            <person name="Jensen-Seaman M.I."/>
            <person name="Kwitek A.E."/>
            <person name="Lazar J."/>
            <person name="Pasko D."/>
            <person name="Tonellato P.J."/>
            <person name="Twigger S."/>
            <person name="Ponting C.P."/>
            <person name="Duarte J.M."/>
            <person name="Rice S."/>
            <person name="Goodstadt L."/>
            <person name="Beatson S.A."/>
            <person name="Emes R.D."/>
            <person name="Winter E.E."/>
            <person name="Webber C."/>
            <person name="Brandt P."/>
            <person name="Nyakatura G."/>
            <person name="Adetobi M."/>
            <person name="Chiaromonte F."/>
            <person name="Elnitski L."/>
            <person name="Eswara P."/>
            <person name="Hardison R.C."/>
            <person name="Hou M."/>
            <person name="Kolbe D."/>
            <person name="Makova K."/>
            <person name="Miller W."/>
            <person name="Nekrutenko A."/>
            <person name="Riemer C."/>
            <person name="Schwartz S."/>
            <person name="Taylor J."/>
            <person name="Yang S."/>
            <person name="Zhang Y."/>
            <person name="Lindpaintner K."/>
            <person name="Andrews T.D."/>
            <person name="Caccamo M."/>
            <person name="Clamp M."/>
            <person name="Clarke L."/>
            <person name="Curwen V."/>
            <person name="Durbin R.M."/>
            <person name="Eyras E."/>
            <person name="Searle S.M."/>
            <person name="Cooper G.M."/>
            <person name="Batzoglou S."/>
            <person name="Brudno M."/>
            <person name="Sidow A."/>
            <person name="Stone E.A."/>
            <person name="Payseur B.A."/>
            <person name="Bourque G."/>
            <person name="Lopez-Otin C."/>
            <person name="Puente X.S."/>
            <person name="Chakrabarti K."/>
            <person name="Chatterji S."/>
            <person name="Dewey C."/>
            <person name="Pachter L."/>
            <person name="Bray N."/>
            <person name="Yap V.B."/>
            <person name="Caspi A."/>
            <person name="Tesler G."/>
            <person name="Pevzner P.A."/>
            <person name="Haussler D."/>
            <person name="Roskin K.M."/>
            <person name="Baertsch R."/>
            <person name="Clawson H."/>
            <person name="Furey T.S."/>
            <person name="Hinrichs A.S."/>
            <person name="Karolchik D."/>
            <person name="Kent W.J."/>
            <person name="Rosenbloom K.R."/>
            <person name="Trumbower H."/>
            <person name="Weirauch M."/>
            <person name="Cooper D.N."/>
            <person name="Stenson P.D."/>
            <person name="Ma B."/>
            <person name="Brent M."/>
            <person name="Arumugam M."/>
            <person name="Shteynberg D."/>
            <person name="Copley R.R."/>
            <person name="Taylor M.S."/>
            <person name="Riethman H."/>
            <person name="Mudunuri U."/>
            <person name="Peterson J."/>
            <person name="Guyer M."/>
            <person name="Felsenfeld A."/>
            <person name="Old S."/>
            <person name="Mockrin S."/>
            <person name="Collins F.S."/>
        </authorList>
    </citation>
    <scope>NUCLEOTIDE SEQUENCE [LARGE SCALE GENOMIC DNA]</scope>
    <source>
        <strain>Brown Norway</strain>
    </source>
</reference>
<reference key="3">
    <citation type="submission" date="2005-07" db="EMBL/GenBank/DDBJ databases">
        <authorList>
            <person name="Mural R.J."/>
            <person name="Adams M.D."/>
            <person name="Myers E.W."/>
            <person name="Smith H.O."/>
            <person name="Venter J.C."/>
        </authorList>
    </citation>
    <scope>NUCLEOTIDE SEQUENCE [LARGE SCALE GENOMIC DNA]</scope>
</reference>
<reference key="4">
    <citation type="journal article" date="2012" name="Nat. Commun.">
        <title>Quantitative maps of protein phosphorylation sites across 14 different rat organs and tissues.</title>
        <authorList>
            <person name="Lundby A."/>
            <person name="Secher A."/>
            <person name="Lage K."/>
            <person name="Nordsborg N.B."/>
            <person name="Dmytriyev A."/>
            <person name="Lundby C."/>
            <person name="Olsen J.V."/>
        </authorList>
    </citation>
    <scope>PHOSPHORYLATION [LARGE SCALE ANALYSIS] AT SER-262; SER-497 AND SER-503</scope>
    <scope>IDENTIFICATION BY MASS SPECTROMETRY [LARGE SCALE ANALYSIS]</scope>
</reference>